<feature type="chain" id="PRO_0000049221" description="Pituitary homeobox 1">
    <location>
        <begin position="1"/>
        <end position="311"/>
    </location>
</feature>
<feature type="DNA-binding region" description="Homeobox" evidence="3">
    <location>
        <begin position="88"/>
        <end position="147"/>
    </location>
</feature>
<feature type="region of interest" description="Disordered" evidence="5">
    <location>
        <begin position="1"/>
        <end position="102"/>
    </location>
</feature>
<feature type="region of interest" description="Interaction with PIT-1" evidence="1">
    <location>
        <begin position="148"/>
        <end position="277"/>
    </location>
</feature>
<feature type="short sequence motif" description="OAR" evidence="4">
    <location>
        <begin position="278"/>
        <end position="291"/>
    </location>
</feature>
<feature type="short sequence motif" description="Nuclear localization signal" evidence="2">
    <location>
        <begin position="284"/>
        <end position="288"/>
    </location>
</feature>
<feature type="compositionally biased region" description="Basic and acidic residues" evidence="5">
    <location>
        <begin position="53"/>
        <end position="68"/>
    </location>
</feature>
<feature type="compositionally biased region" description="Basic residues" evidence="5">
    <location>
        <begin position="84"/>
        <end position="93"/>
    </location>
</feature>
<feature type="sequence conflict" description="In Ref. 2; AAC23684." evidence="9" ref="2">
    <original>D</original>
    <variation>E</variation>
    <location>
        <position position="52"/>
    </location>
</feature>
<feature type="sequence conflict" description="In Ref. 2." evidence="9" ref="2">
    <original>ESRKTR</original>
    <variation>GEQKN</variation>
    <location>
        <begin position="60"/>
        <end position="65"/>
    </location>
</feature>
<feature type="sequence conflict" description="In Ref. 2." evidence="9" ref="2">
    <location>
        <begin position="69"/>
        <end position="77"/>
    </location>
</feature>
<feature type="sequence conflict" description="In Ref. 2; AAC23684." evidence="9" ref="2">
    <original>A</original>
    <variation>R</variation>
    <location>
        <position position="284"/>
    </location>
</feature>
<feature type="sequence conflict" description="In Ref. 2; AAC23684." evidence="9" ref="2">
    <original>N</original>
    <variation>NS</variation>
    <location>
        <position position="311"/>
    </location>
</feature>
<sequence length="311" mass="34473">MDSFKGGMNLERLPESLRPQPSHDMASSFHLQRSSEPRDPIENSASESSDTDVPEKERSESRKTREDGGAGSAGCTGAADDPAKKKKQRRQRTHFTSQQLQELEATFQRNRYPDMSMREEIAVWTNLTEPRVRVWFKNRRAKWRKRERNQQMDLCKNGYVPQFSGLMQPYDDMYAGYPYNNWATKSLTPAPLSTKSFTFFNSMSPLSSQSMFSAPSSISSMNMPSGMGHSAVPGMANSGLNNINNISGSSLNSAMSSPACPYGPPGSPYSVYRDTCNSSLASLALKSKQHSSFGYSSLQSPGSSLNACQYN</sequence>
<name>PITX1_CHICK</name>
<dbReference type="EMBL" id="AF069397">
    <property type="protein sequence ID" value="AAC23684.1"/>
    <property type="molecule type" value="mRNA"/>
</dbReference>
<dbReference type="SMR" id="P56673"/>
<dbReference type="FunCoup" id="P56673">
    <property type="interactions" value="261"/>
</dbReference>
<dbReference type="STRING" id="9031.ENSGALP00000044159"/>
<dbReference type="PaxDb" id="9031-ENSGALP00000009413"/>
<dbReference type="VEuPathDB" id="HostDB:geneid_374201"/>
<dbReference type="eggNOG" id="KOG0486">
    <property type="taxonomic scope" value="Eukaryota"/>
</dbReference>
<dbReference type="HOGENOM" id="CLU_030301_0_0_1"/>
<dbReference type="InParanoid" id="P56673"/>
<dbReference type="OrthoDB" id="6159439at2759"/>
<dbReference type="PhylomeDB" id="P56673"/>
<dbReference type="Proteomes" id="UP000000539">
    <property type="component" value="Unassembled WGS sequence"/>
</dbReference>
<dbReference type="GO" id="GO:0005634">
    <property type="term" value="C:nucleus"/>
    <property type="evidence" value="ECO:0000250"/>
    <property type="project" value="UniProtKB"/>
</dbReference>
<dbReference type="GO" id="GO:0003700">
    <property type="term" value="F:DNA-binding transcription factor activity"/>
    <property type="evidence" value="ECO:0000314"/>
    <property type="project" value="UniProtKB"/>
</dbReference>
<dbReference type="GO" id="GO:0000981">
    <property type="term" value="F:DNA-binding transcription factor activity, RNA polymerase II-specific"/>
    <property type="evidence" value="ECO:0000318"/>
    <property type="project" value="GO_Central"/>
</dbReference>
<dbReference type="GO" id="GO:0000978">
    <property type="term" value="F:RNA polymerase II cis-regulatory region sequence-specific DNA binding"/>
    <property type="evidence" value="ECO:0000318"/>
    <property type="project" value="GO_Central"/>
</dbReference>
<dbReference type="GO" id="GO:0009653">
    <property type="term" value="P:anatomical structure morphogenesis"/>
    <property type="evidence" value="ECO:0000318"/>
    <property type="project" value="GO_Central"/>
</dbReference>
<dbReference type="GO" id="GO:0006357">
    <property type="term" value="P:regulation of transcription by RNA polymerase II"/>
    <property type="evidence" value="ECO:0000318"/>
    <property type="project" value="GO_Central"/>
</dbReference>
<dbReference type="CDD" id="cd00086">
    <property type="entry name" value="homeodomain"/>
    <property type="match status" value="1"/>
</dbReference>
<dbReference type="FunFam" id="1.10.10.60:FF:000031">
    <property type="entry name" value="Homeobox protein"/>
    <property type="match status" value="1"/>
</dbReference>
<dbReference type="Gene3D" id="1.10.10.60">
    <property type="entry name" value="Homeodomain-like"/>
    <property type="match status" value="1"/>
</dbReference>
<dbReference type="InterPro" id="IPR001356">
    <property type="entry name" value="HD"/>
</dbReference>
<dbReference type="InterPro" id="IPR017970">
    <property type="entry name" value="Homeobox_CS"/>
</dbReference>
<dbReference type="InterPro" id="IPR016233">
    <property type="entry name" value="Homeobox_Pitx/unc30"/>
</dbReference>
<dbReference type="InterPro" id="IPR009057">
    <property type="entry name" value="Homeodomain-like_sf"/>
</dbReference>
<dbReference type="InterPro" id="IPR003654">
    <property type="entry name" value="OAR_dom"/>
</dbReference>
<dbReference type="PANTHER" id="PTHR45882:SF1">
    <property type="entry name" value="PITUITARY HOMEOBOX 1"/>
    <property type="match status" value="1"/>
</dbReference>
<dbReference type="PANTHER" id="PTHR45882">
    <property type="entry name" value="PITUITARY HOMEOBOX HOMOLOG PTX1"/>
    <property type="match status" value="1"/>
</dbReference>
<dbReference type="Pfam" id="PF00046">
    <property type="entry name" value="Homeodomain"/>
    <property type="match status" value="1"/>
</dbReference>
<dbReference type="PIRSF" id="PIRSF000563">
    <property type="entry name" value="Homeobox_protein_Pitx/Unc30"/>
    <property type="match status" value="1"/>
</dbReference>
<dbReference type="SMART" id="SM00389">
    <property type="entry name" value="HOX"/>
    <property type="match status" value="1"/>
</dbReference>
<dbReference type="SUPFAM" id="SSF46689">
    <property type="entry name" value="Homeodomain-like"/>
    <property type="match status" value="1"/>
</dbReference>
<dbReference type="PROSITE" id="PS00027">
    <property type="entry name" value="HOMEOBOX_1"/>
    <property type="match status" value="1"/>
</dbReference>
<dbReference type="PROSITE" id="PS50071">
    <property type="entry name" value="HOMEOBOX_2"/>
    <property type="match status" value="1"/>
</dbReference>
<dbReference type="PROSITE" id="PS50803">
    <property type="entry name" value="OAR"/>
    <property type="match status" value="1"/>
</dbReference>
<reference key="1">
    <citation type="journal article" date="1997" name="Development">
        <title>The bicoid-related homeoprotein Ptx1 defines the most anterior domain of the embryo and differentiates posterior from anterior lateral mesoderm.</title>
        <authorList>
            <person name="Lanctot C."/>
            <person name="Lamolet B."/>
            <person name="Drouin J."/>
        </authorList>
    </citation>
    <scope>NUCLEOTIDE SEQUENCE [MRNA]</scope>
    <scope>DEVELOPMENTAL STAGE</scope>
    <source>
        <tissue>Pituitary</tissue>
    </source>
</reference>
<reference key="2">
    <citation type="journal article" date="1998" name="Development">
        <title>Differential regulation of T-box and homeobox transcription factors suggests roles in controlling chick limb-type identity.</title>
        <authorList>
            <person name="Logan M."/>
            <person name="Simon H.-G."/>
            <person name="Tabin C."/>
        </authorList>
    </citation>
    <scope>NUCLEOTIDE SEQUENCE [MRNA]</scope>
</reference>
<reference key="3">
    <citation type="journal article" date="2013" name="Genome Res.">
        <title>Distinct global shifts in genomic binding profiles of limb malformation-associated HOXD13 mutations.</title>
        <authorList>
            <person name="Ibrahim D.M."/>
            <person name="Hansen P."/>
            <person name="Roedelsperger C."/>
            <person name="Stiege A.C."/>
            <person name="Doelken S.C."/>
            <person name="Horn D."/>
            <person name="Jaeger M."/>
            <person name="Janetzki C."/>
            <person name="Krawitz P."/>
            <person name="Leschik G."/>
            <person name="Wagner F."/>
            <person name="Scheuer T."/>
            <person name="Schmidt-von Kegler M."/>
            <person name="Seemann P."/>
            <person name="Timmermann B."/>
            <person name="Robinson P.N."/>
            <person name="Mundlos S."/>
            <person name="Hecht J."/>
        </authorList>
    </citation>
    <scope>FUNCTION</scope>
</reference>
<protein>
    <recommendedName>
        <fullName>Pituitary homeobox 1</fullName>
    </recommendedName>
    <alternativeName>
        <fullName>Homeobox protein PITX1</fullName>
    </alternativeName>
    <alternativeName>
        <fullName>Paired-like homeodomain transcription factor 1</fullName>
    </alternativeName>
    <alternativeName>
        <fullName>cPTX1</fullName>
    </alternativeName>
</protein>
<organism>
    <name type="scientific">Gallus gallus</name>
    <name type="common">Chicken</name>
    <dbReference type="NCBI Taxonomy" id="9031"/>
    <lineage>
        <taxon>Eukaryota</taxon>
        <taxon>Metazoa</taxon>
        <taxon>Chordata</taxon>
        <taxon>Craniata</taxon>
        <taxon>Vertebrata</taxon>
        <taxon>Euteleostomi</taxon>
        <taxon>Archelosauria</taxon>
        <taxon>Archosauria</taxon>
        <taxon>Dinosauria</taxon>
        <taxon>Saurischia</taxon>
        <taxon>Theropoda</taxon>
        <taxon>Coelurosauria</taxon>
        <taxon>Aves</taxon>
        <taxon>Neognathae</taxon>
        <taxon>Galloanserae</taxon>
        <taxon>Galliformes</taxon>
        <taxon>Phasianidae</taxon>
        <taxon>Phasianinae</taxon>
        <taxon>Gallus</taxon>
    </lineage>
</organism>
<proteinExistence type="evidence at transcript level"/>
<accession>P56673</accession>
<accession>O93358</accession>
<evidence type="ECO:0000250" key="1"/>
<evidence type="ECO:0000255" key="2"/>
<evidence type="ECO:0000255" key="3">
    <source>
        <dbReference type="PROSITE-ProRule" id="PRU00108"/>
    </source>
</evidence>
<evidence type="ECO:0000255" key="4">
    <source>
        <dbReference type="PROSITE-ProRule" id="PRU00138"/>
    </source>
</evidence>
<evidence type="ECO:0000256" key="5">
    <source>
        <dbReference type="SAM" id="MobiDB-lite"/>
    </source>
</evidence>
<evidence type="ECO:0000269" key="6">
    <source>
    </source>
</evidence>
<evidence type="ECO:0000269" key="7">
    <source>
    </source>
</evidence>
<evidence type="ECO:0000269" key="8">
    <source>
    </source>
</evidence>
<evidence type="ECO:0000305" key="9"/>
<comment type="function">
    <text evidence="6 7 8">Sequence-specific transcription factor that binds gene promoters and activates their transcription. May play a role in the development of anterior structures, and in particular, the brain and facies and in specifying the identity or structure of hindlimb. Acts as a transcriptional activator by binding to promoter sequences with a TAAT/GCC core motif.</text>
</comment>
<comment type="subcellular location">
    <subcellularLocation>
        <location>Nucleus</location>
    </subcellularLocation>
</comment>
<comment type="tissue specificity">
    <text>Expressed in primordial Rathke pouch, oral epithelium, first branchial arch, duodenum, and hindlimb.</text>
</comment>
<comment type="developmental stage">
    <text evidence="7">In the head region, first detected in 10-somite embryos in the stomodeum and rostral foregut. At day 3, expressed in Rathke pouch, in the mandibular and oral epithelia, in the foregut endoderm and in the posterior lateral plate mesoderm. Expression is maintained in these structures in later stages and at day 5, can be seen in the distal portion of the hindlimb.</text>
</comment>
<comment type="similarity">
    <text evidence="9">Belongs to the paired homeobox family. Bicoid subfamily.</text>
</comment>
<keyword id="KW-0010">Activator</keyword>
<keyword id="KW-0217">Developmental protein</keyword>
<keyword id="KW-0238">DNA-binding</keyword>
<keyword id="KW-0371">Homeobox</keyword>
<keyword id="KW-0539">Nucleus</keyword>
<keyword id="KW-1185">Reference proteome</keyword>
<keyword id="KW-0804">Transcription</keyword>
<keyword id="KW-0805">Transcription regulation</keyword>
<gene>
    <name type="primary">PITX1</name>
    <name type="synonym">PTX1</name>
</gene>